<proteinExistence type="inferred from homology"/>
<reference key="1">
    <citation type="journal article" date="1998" name="Nature">
        <title>The complete genome of the hyperthermophilic bacterium Aquifex aeolicus.</title>
        <authorList>
            <person name="Deckert G."/>
            <person name="Warren P.V."/>
            <person name="Gaasterland T."/>
            <person name="Young W.G."/>
            <person name="Lenox A.L."/>
            <person name="Graham D.E."/>
            <person name="Overbeek R."/>
            <person name="Snead M.A."/>
            <person name="Keller M."/>
            <person name="Aujay M."/>
            <person name="Huber R."/>
            <person name="Feldman R.A."/>
            <person name="Short J.M."/>
            <person name="Olsen G.J."/>
            <person name="Swanson R.V."/>
        </authorList>
    </citation>
    <scope>NUCLEOTIDE SEQUENCE [LARGE SCALE GENOMIC DNA]</scope>
    <source>
        <strain>VF5</strain>
    </source>
</reference>
<dbReference type="EC" id="1.1.1.37" evidence="1"/>
<dbReference type="EMBL" id="AE000657">
    <property type="protein sequence ID" value="AAC07619.1"/>
    <property type="molecule type" value="Genomic_DNA"/>
</dbReference>
<dbReference type="PIR" id="E70453">
    <property type="entry name" value="E70453"/>
</dbReference>
<dbReference type="RefSeq" id="NP_214221.1">
    <property type="nucleotide sequence ID" value="NC_000918.1"/>
</dbReference>
<dbReference type="RefSeq" id="WP_010881158.1">
    <property type="nucleotide sequence ID" value="NC_000918.1"/>
</dbReference>
<dbReference type="SMR" id="O67655"/>
<dbReference type="FunCoup" id="O67655">
    <property type="interactions" value="415"/>
</dbReference>
<dbReference type="STRING" id="224324.aq_1782"/>
<dbReference type="EnsemblBacteria" id="AAC07619">
    <property type="protein sequence ID" value="AAC07619"/>
    <property type="gene ID" value="aq_1782"/>
</dbReference>
<dbReference type="KEGG" id="aae:aq_1782"/>
<dbReference type="PATRIC" id="fig|224324.8.peg.1378"/>
<dbReference type="eggNOG" id="COG0039">
    <property type="taxonomic scope" value="Bacteria"/>
</dbReference>
<dbReference type="HOGENOM" id="CLU_045401_2_1_0"/>
<dbReference type="InParanoid" id="O67655"/>
<dbReference type="OrthoDB" id="9802969at2"/>
<dbReference type="Proteomes" id="UP000000798">
    <property type="component" value="Chromosome"/>
</dbReference>
<dbReference type="GO" id="GO:0005737">
    <property type="term" value="C:cytoplasm"/>
    <property type="evidence" value="ECO:0000318"/>
    <property type="project" value="GO_Central"/>
</dbReference>
<dbReference type="GO" id="GO:0030060">
    <property type="term" value="F:L-malate dehydrogenase (NAD+) activity"/>
    <property type="evidence" value="ECO:0000318"/>
    <property type="project" value="GO_Central"/>
</dbReference>
<dbReference type="GO" id="GO:0019752">
    <property type="term" value="P:carboxylic acid metabolic process"/>
    <property type="evidence" value="ECO:0007669"/>
    <property type="project" value="InterPro"/>
</dbReference>
<dbReference type="GO" id="GO:0006099">
    <property type="term" value="P:tricarboxylic acid cycle"/>
    <property type="evidence" value="ECO:0007669"/>
    <property type="project" value="UniProtKB-UniRule"/>
</dbReference>
<dbReference type="CDD" id="cd01339">
    <property type="entry name" value="LDH-like_MDH"/>
    <property type="match status" value="1"/>
</dbReference>
<dbReference type="FunFam" id="3.40.50.720:FF:000018">
    <property type="entry name" value="Malate dehydrogenase"/>
    <property type="match status" value="1"/>
</dbReference>
<dbReference type="FunFam" id="3.90.110.10:FF:000004">
    <property type="entry name" value="Malate dehydrogenase"/>
    <property type="match status" value="1"/>
</dbReference>
<dbReference type="Gene3D" id="3.90.110.10">
    <property type="entry name" value="Lactate dehydrogenase/glycoside hydrolase, family 4, C-terminal"/>
    <property type="match status" value="1"/>
</dbReference>
<dbReference type="Gene3D" id="3.40.50.720">
    <property type="entry name" value="NAD(P)-binding Rossmann-like Domain"/>
    <property type="match status" value="1"/>
</dbReference>
<dbReference type="HAMAP" id="MF_00487">
    <property type="entry name" value="Malate_dehydrog_3"/>
    <property type="match status" value="1"/>
</dbReference>
<dbReference type="InterPro" id="IPR001557">
    <property type="entry name" value="L-lactate/malate_DH"/>
</dbReference>
<dbReference type="InterPro" id="IPR022383">
    <property type="entry name" value="Lactate/malate_DH_C"/>
</dbReference>
<dbReference type="InterPro" id="IPR001236">
    <property type="entry name" value="Lactate/malate_DH_N"/>
</dbReference>
<dbReference type="InterPro" id="IPR015955">
    <property type="entry name" value="Lactate_DH/Glyco_Ohase_4_C"/>
</dbReference>
<dbReference type="InterPro" id="IPR011275">
    <property type="entry name" value="Malate_DH_type3"/>
</dbReference>
<dbReference type="InterPro" id="IPR036291">
    <property type="entry name" value="NAD(P)-bd_dom_sf"/>
</dbReference>
<dbReference type="NCBIfam" id="TIGR01763">
    <property type="entry name" value="MalateDH_bact"/>
    <property type="match status" value="1"/>
</dbReference>
<dbReference type="NCBIfam" id="NF004863">
    <property type="entry name" value="PRK06223.1"/>
    <property type="match status" value="1"/>
</dbReference>
<dbReference type="PANTHER" id="PTHR43128">
    <property type="entry name" value="L-2-HYDROXYCARBOXYLATE DEHYDROGENASE (NAD(P)(+))"/>
    <property type="match status" value="1"/>
</dbReference>
<dbReference type="PANTHER" id="PTHR43128:SF16">
    <property type="entry name" value="L-LACTATE DEHYDROGENASE"/>
    <property type="match status" value="1"/>
</dbReference>
<dbReference type="Pfam" id="PF02866">
    <property type="entry name" value="Ldh_1_C"/>
    <property type="match status" value="1"/>
</dbReference>
<dbReference type="Pfam" id="PF00056">
    <property type="entry name" value="Ldh_1_N"/>
    <property type="match status" value="1"/>
</dbReference>
<dbReference type="PIRSF" id="PIRSF000102">
    <property type="entry name" value="Lac_mal_DH"/>
    <property type="match status" value="1"/>
</dbReference>
<dbReference type="PRINTS" id="PR00086">
    <property type="entry name" value="LLDHDRGNASE"/>
</dbReference>
<dbReference type="SUPFAM" id="SSF56327">
    <property type="entry name" value="LDH C-terminal domain-like"/>
    <property type="match status" value="1"/>
</dbReference>
<dbReference type="SUPFAM" id="SSF51735">
    <property type="entry name" value="NAD(P)-binding Rossmann-fold domains"/>
    <property type="match status" value="1"/>
</dbReference>
<protein>
    <recommendedName>
        <fullName evidence="1">Malate dehydrogenase 1</fullName>
        <ecNumber evidence="1">1.1.1.37</ecNumber>
    </recommendedName>
</protein>
<feature type="chain" id="PRO_0000113422" description="Malate dehydrogenase 1">
    <location>
        <begin position="1"/>
        <end position="335"/>
    </location>
</feature>
<feature type="active site" description="Proton acceptor" evidence="1">
    <location>
        <position position="190"/>
    </location>
</feature>
<feature type="binding site" evidence="1">
    <location>
        <begin position="11"/>
        <end position="16"/>
    </location>
    <ligand>
        <name>NAD(+)</name>
        <dbReference type="ChEBI" id="CHEBI:57540"/>
    </ligand>
</feature>
<feature type="binding site" evidence="1">
    <location>
        <position position="35"/>
    </location>
    <ligand>
        <name>NAD(+)</name>
        <dbReference type="ChEBI" id="CHEBI:57540"/>
    </ligand>
</feature>
<feature type="binding site" evidence="1">
    <location>
        <position position="97"/>
    </location>
    <ligand>
        <name>substrate</name>
    </ligand>
</feature>
<feature type="binding site" evidence="1">
    <location>
        <position position="103"/>
    </location>
    <ligand>
        <name>substrate</name>
    </ligand>
</feature>
<feature type="binding site" evidence="1">
    <location>
        <position position="110"/>
    </location>
    <ligand>
        <name>NAD(+)</name>
        <dbReference type="ChEBI" id="CHEBI:57540"/>
    </ligand>
</feature>
<feature type="binding site" evidence="1">
    <location>
        <begin position="133"/>
        <end position="135"/>
    </location>
    <ligand>
        <name>NAD(+)</name>
        <dbReference type="ChEBI" id="CHEBI:57540"/>
    </ligand>
</feature>
<feature type="binding site" evidence="1">
    <location>
        <position position="135"/>
    </location>
    <ligand>
        <name>substrate</name>
    </ligand>
</feature>
<feature type="binding site" evidence="1">
    <location>
        <position position="166"/>
    </location>
    <ligand>
        <name>substrate</name>
    </ligand>
</feature>
<sequence>MRMKKTVAVIGAGNVGEHVASLILLKNLANVKMFDLPRKTEEKVFEPVKGKALDMKQMLAAMDIDARVEGYTVTPEGEGYEPLEGSDIVVITAGFPRRPGMSREDLLEANIRIISVIADRIKRYAPDAIVIVVTNPVDVMTYVAYKLLNFPKNRVMGMAGVLDSARFKTFISEELMVSPKDIHAYVIGGHGDEMVPLISISNVGGIPLKDLLPKEKLEKIIERTRFGGGEIVNLMGTSAYYAPAAAIVDMIEALVQNSKRILPCSVYLDGEAGEYYGVQGFCVGVPVKLGSNGVEEIIKVPMIEEEREMWRRSVESVKKTVEVAEGILSAGSSRQ</sequence>
<keyword id="KW-0520">NAD</keyword>
<keyword id="KW-0560">Oxidoreductase</keyword>
<keyword id="KW-1185">Reference proteome</keyword>
<keyword id="KW-0816">Tricarboxylic acid cycle</keyword>
<organism>
    <name type="scientific">Aquifex aeolicus (strain VF5)</name>
    <dbReference type="NCBI Taxonomy" id="224324"/>
    <lineage>
        <taxon>Bacteria</taxon>
        <taxon>Pseudomonadati</taxon>
        <taxon>Aquificota</taxon>
        <taxon>Aquificia</taxon>
        <taxon>Aquificales</taxon>
        <taxon>Aquificaceae</taxon>
        <taxon>Aquifex</taxon>
    </lineage>
</organism>
<comment type="function">
    <text evidence="1">Catalyzes the reversible oxidation of malate to oxaloacetate.</text>
</comment>
<comment type="catalytic activity">
    <reaction evidence="1">
        <text>(S)-malate + NAD(+) = oxaloacetate + NADH + H(+)</text>
        <dbReference type="Rhea" id="RHEA:21432"/>
        <dbReference type="ChEBI" id="CHEBI:15378"/>
        <dbReference type="ChEBI" id="CHEBI:15589"/>
        <dbReference type="ChEBI" id="CHEBI:16452"/>
        <dbReference type="ChEBI" id="CHEBI:57540"/>
        <dbReference type="ChEBI" id="CHEBI:57945"/>
        <dbReference type="EC" id="1.1.1.37"/>
    </reaction>
</comment>
<comment type="similarity">
    <text evidence="1">Belongs to the LDH/MDH superfamily. MDH type 3 family.</text>
</comment>
<gene>
    <name type="primary">mdh1</name>
    <name type="synonym">mdh</name>
    <name type="ordered locus">aq_1782</name>
</gene>
<name>MDH1_AQUAE</name>
<evidence type="ECO:0000255" key="1">
    <source>
        <dbReference type="HAMAP-Rule" id="MF_00487"/>
    </source>
</evidence>
<accession>O67655</accession>